<keyword id="KW-0963">Cytoplasm</keyword>
<keyword id="KW-0269">Exonuclease</keyword>
<keyword id="KW-0378">Hydrolase</keyword>
<keyword id="KW-0540">Nuclease</keyword>
<protein>
    <recommendedName>
        <fullName evidence="1">Exodeoxyribonuclease 7 small subunit</fullName>
        <ecNumber evidence="1">3.1.11.6</ecNumber>
    </recommendedName>
    <alternativeName>
        <fullName evidence="1">Exodeoxyribonuclease VII small subunit</fullName>
        <shortName evidence="1">Exonuclease VII small subunit</shortName>
    </alternativeName>
</protein>
<organism>
    <name type="scientific">Yersinia pseudotuberculosis serotype O:3 (strain YPIII)</name>
    <dbReference type="NCBI Taxonomy" id="502800"/>
    <lineage>
        <taxon>Bacteria</taxon>
        <taxon>Pseudomonadati</taxon>
        <taxon>Pseudomonadota</taxon>
        <taxon>Gammaproteobacteria</taxon>
        <taxon>Enterobacterales</taxon>
        <taxon>Yersiniaceae</taxon>
        <taxon>Yersinia</taxon>
    </lineage>
</organism>
<comment type="function">
    <text evidence="1">Bidirectionally degrades single-stranded DNA into large acid-insoluble oligonucleotides, which are then degraded further into small acid-soluble oligonucleotides.</text>
</comment>
<comment type="catalytic activity">
    <reaction evidence="1">
        <text>Exonucleolytic cleavage in either 5'- to 3'- or 3'- to 5'-direction to yield nucleoside 5'-phosphates.</text>
        <dbReference type="EC" id="3.1.11.6"/>
    </reaction>
</comment>
<comment type="subunit">
    <text evidence="1">Heterooligomer composed of large and small subunits.</text>
</comment>
<comment type="subcellular location">
    <subcellularLocation>
        <location evidence="1">Cytoplasm</location>
    </subcellularLocation>
</comment>
<comment type="similarity">
    <text evidence="1">Belongs to the XseB family.</text>
</comment>
<name>EX7S_YERPY</name>
<sequence length="84" mass="9336">MPKKAASPEIKAASFETSLSELEQIVTRLESGELPLEDALNEFERGVQLVRQGQQTLLQAEQRVQILLSDDVDAPLKPFTPDTE</sequence>
<accession>B1JID6</accession>
<gene>
    <name evidence="1" type="primary">xseB</name>
    <name type="ordered locus">YPK_3251</name>
</gene>
<evidence type="ECO:0000255" key="1">
    <source>
        <dbReference type="HAMAP-Rule" id="MF_00337"/>
    </source>
</evidence>
<dbReference type="EC" id="3.1.11.6" evidence="1"/>
<dbReference type="EMBL" id="CP000950">
    <property type="protein sequence ID" value="ACA69520.1"/>
    <property type="molecule type" value="Genomic_DNA"/>
</dbReference>
<dbReference type="RefSeq" id="WP_012304509.1">
    <property type="nucleotide sequence ID" value="NZ_CP009792.1"/>
</dbReference>
<dbReference type="SMR" id="B1JID6"/>
<dbReference type="KEGG" id="ypy:YPK_3251"/>
<dbReference type="PATRIC" id="fig|502800.11.peg.3980"/>
<dbReference type="GO" id="GO:0005829">
    <property type="term" value="C:cytosol"/>
    <property type="evidence" value="ECO:0007669"/>
    <property type="project" value="TreeGrafter"/>
</dbReference>
<dbReference type="GO" id="GO:0009318">
    <property type="term" value="C:exodeoxyribonuclease VII complex"/>
    <property type="evidence" value="ECO:0007669"/>
    <property type="project" value="InterPro"/>
</dbReference>
<dbReference type="GO" id="GO:0008855">
    <property type="term" value="F:exodeoxyribonuclease VII activity"/>
    <property type="evidence" value="ECO:0007669"/>
    <property type="project" value="UniProtKB-UniRule"/>
</dbReference>
<dbReference type="GO" id="GO:0006308">
    <property type="term" value="P:DNA catabolic process"/>
    <property type="evidence" value="ECO:0007669"/>
    <property type="project" value="UniProtKB-UniRule"/>
</dbReference>
<dbReference type="FunFam" id="1.10.287.1040:FF:000001">
    <property type="entry name" value="Exodeoxyribonuclease 7 small subunit"/>
    <property type="match status" value="1"/>
</dbReference>
<dbReference type="Gene3D" id="1.10.287.1040">
    <property type="entry name" value="Exonuclease VII, small subunit"/>
    <property type="match status" value="1"/>
</dbReference>
<dbReference type="HAMAP" id="MF_00337">
    <property type="entry name" value="Exonuc_7_S"/>
    <property type="match status" value="1"/>
</dbReference>
<dbReference type="InterPro" id="IPR003761">
    <property type="entry name" value="Exonuc_VII_S"/>
</dbReference>
<dbReference type="InterPro" id="IPR037004">
    <property type="entry name" value="Exonuc_VII_ssu_sf"/>
</dbReference>
<dbReference type="NCBIfam" id="NF002137">
    <property type="entry name" value="PRK00977.1-1"/>
    <property type="match status" value="1"/>
</dbReference>
<dbReference type="NCBIfam" id="NF002140">
    <property type="entry name" value="PRK00977.1-4"/>
    <property type="match status" value="1"/>
</dbReference>
<dbReference type="NCBIfam" id="TIGR01280">
    <property type="entry name" value="xseB"/>
    <property type="match status" value="1"/>
</dbReference>
<dbReference type="PANTHER" id="PTHR34137">
    <property type="entry name" value="EXODEOXYRIBONUCLEASE 7 SMALL SUBUNIT"/>
    <property type="match status" value="1"/>
</dbReference>
<dbReference type="PANTHER" id="PTHR34137:SF1">
    <property type="entry name" value="EXODEOXYRIBONUCLEASE 7 SMALL SUBUNIT"/>
    <property type="match status" value="1"/>
</dbReference>
<dbReference type="Pfam" id="PF02609">
    <property type="entry name" value="Exonuc_VII_S"/>
    <property type="match status" value="1"/>
</dbReference>
<dbReference type="PIRSF" id="PIRSF006488">
    <property type="entry name" value="Exonuc_VII_S"/>
    <property type="match status" value="1"/>
</dbReference>
<dbReference type="SUPFAM" id="SSF116842">
    <property type="entry name" value="XseB-like"/>
    <property type="match status" value="1"/>
</dbReference>
<reference key="1">
    <citation type="submission" date="2008-02" db="EMBL/GenBank/DDBJ databases">
        <title>Complete sequence of Yersinia pseudotuberculosis YPIII.</title>
        <authorList>
            <consortium name="US DOE Joint Genome Institute"/>
            <person name="Copeland A."/>
            <person name="Lucas S."/>
            <person name="Lapidus A."/>
            <person name="Glavina del Rio T."/>
            <person name="Dalin E."/>
            <person name="Tice H."/>
            <person name="Bruce D."/>
            <person name="Goodwin L."/>
            <person name="Pitluck S."/>
            <person name="Munk A.C."/>
            <person name="Brettin T."/>
            <person name="Detter J.C."/>
            <person name="Han C."/>
            <person name="Tapia R."/>
            <person name="Schmutz J."/>
            <person name="Larimer F."/>
            <person name="Land M."/>
            <person name="Hauser L."/>
            <person name="Challacombe J.F."/>
            <person name="Green L."/>
            <person name="Lindler L.E."/>
            <person name="Nikolich M.P."/>
            <person name="Richardson P."/>
        </authorList>
    </citation>
    <scope>NUCLEOTIDE SEQUENCE [LARGE SCALE GENOMIC DNA]</scope>
    <source>
        <strain>YPIII</strain>
    </source>
</reference>
<proteinExistence type="inferred from homology"/>
<feature type="chain" id="PRO_1000119974" description="Exodeoxyribonuclease 7 small subunit">
    <location>
        <begin position="1"/>
        <end position="84"/>
    </location>
</feature>